<reference key="1">
    <citation type="journal article" date="2005" name="J. Bacteriol.">
        <title>Insights into genome plasticity and pathogenicity of the plant pathogenic Bacterium Xanthomonas campestris pv. vesicatoria revealed by the complete genome sequence.</title>
        <authorList>
            <person name="Thieme F."/>
            <person name="Koebnik R."/>
            <person name="Bekel T."/>
            <person name="Berger C."/>
            <person name="Boch J."/>
            <person name="Buettner D."/>
            <person name="Caldana C."/>
            <person name="Gaigalat L."/>
            <person name="Goesmann A."/>
            <person name="Kay S."/>
            <person name="Kirchner O."/>
            <person name="Lanz C."/>
            <person name="Linke B."/>
            <person name="McHardy A.C."/>
            <person name="Meyer F."/>
            <person name="Mittenhuber G."/>
            <person name="Nies D.H."/>
            <person name="Niesbach-Kloesgen U."/>
            <person name="Patschkowski T."/>
            <person name="Rueckert C."/>
            <person name="Rupp O."/>
            <person name="Schneiker S."/>
            <person name="Schuster S.C."/>
            <person name="Vorhoelter F.J."/>
            <person name="Weber E."/>
            <person name="Puehler A."/>
            <person name="Bonas U."/>
            <person name="Bartels D."/>
            <person name="Kaiser O."/>
        </authorList>
    </citation>
    <scope>NUCLEOTIDE SEQUENCE [LARGE SCALE GENOMIC DNA]</scope>
    <source>
        <strain>85-10</strain>
    </source>
</reference>
<dbReference type="EC" id="7.1.1.-" evidence="1"/>
<dbReference type="EMBL" id="AM039952">
    <property type="protein sequence ID" value="CAJ24530.1"/>
    <property type="molecule type" value="Genomic_DNA"/>
</dbReference>
<dbReference type="RefSeq" id="WP_011347939.1">
    <property type="nucleotide sequence ID" value="NZ_CP017190.1"/>
</dbReference>
<dbReference type="SMR" id="Q3BRN1"/>
<dbReference type="STRING" id="456327.BJD11_08615"/>
<dbReference type="KEGG" id="xcv:XCV2851"/>
<dbReference type="eggNOG" id="COG0852">
    <property type="taxonomic scope" value="Bacteria"/>
</dbReference>
<dbReference type="HOGENOM" id="CLU_042628_2_1_6"/>
<dbReference type="Proteomes" id="UP000007069">
    <property type="component" value="Chromosome"/>
</dbReference>
<dbReference type="GO" id="GO:0005886">
    <property type="term" value="C:plasma membrane"/>
    <property type="evidence" value="ECO:0007669"/>
    <property type="project" value="UniProtKB-SubCell"/>
</dbReference>
<dbReference type="GO" id="GO:0008137">
    <property type="term" value="F:NADH dehydrogenase (ubiquinone) activity"/>
    <property type="evidence" value="ECO:0007669"/>
    <property type="project" value="InterPro"/>
</dbReference>
<dbReference type="GO" id="GO:0050136">
    <property type="term" value="F:NADH:ubiquinone reductase (non-electrogenic) activity"/>
    <property type="evidence" value="ECO:0007669"/>
    <property type="project" value="UniProtKB-UniRule"/>
</dbReference>
<dbReference type="GO" id="GO:0048038">
    <property type="term" value="F:quinone binding"/>
    <property type="evidence" value="ECO:0007669"/>
    <property type="project" value="UniProtKB-KW"/>
</dbReference>
<dbReference type="Gene3D" id="3.30.460.80">
    <property type="entry name" value="NADH:ubiquinone oxidoreductase, 30kDa subunit"/>
    <property type="match status" value="1"/>
</dbReference>
<dbReference type="HAMAP" id="MF_01357">
    <property type="entry name" value="NDH1_NuoC"/>
    <property type="match status" value="1"/>
</dbReference>
<dbReference type="InterPro" id="IPR010218">
    <property type="entry name" value="NADH_DH_suC"/>
</dbReference>
<dbReference type="InterPro" id="IPR037232">
    <property type="entry name" value="NADH_quin_OxRdtase_su_C/D-like"/>
</dbReference>
<dbReference type="InterPro" id="IPR001268">
    <property type="entry name" value="NADH_UbQ_OxRdtase_30kDa_su"/>
</dbReference>
<dbReference type="InterPro" id="IPR020396">
    <property type="entry name" value="NADH_UbQ_OxRdtase_CS"/>
</dbReference>
<dbReference type="NCBIfam" id="NF004730">
    <property type="entry name" value="PRK06074.1-1"/>
    <property type="match status" value="1"/>
</dbReference>
<dbReference type="NCBIfam" id="NF004732">
    <property type="entry name" value="PRK06074.1-4"/>
    <property type="match status" value="1"/>
</dbReference>
<dbReference type="PANTHER" id="PTHR10884:SF14">
    <property type="entry name" value="NADH DEHYDROGENASE [UBIQUINONE] IRON-SULFUR PROTEIN 3, MITOCHONDRIAL"/>
    <property type="match status" value="1"/>
</dbReference>
<dbReference type="PANTHER" id="PTHR10884">
    <property type="entry name" value="NADH DEHYDROGENASE UBIQUINONE IRON-SULFUR PROTEIN 3"/>
    <property type="match status" value="1"/>
</dbReference>
<dbReference type="Pfam" id="PF00329">
    <property type="entry name" value="Complex1_30kDa"/>
    <property type="match status" value="1"/>
</dbReference>
<dbReference type="SUPFAM" id="SSF143243">
    <property type="entry name" value="Nqo5-like"/>
    <property type="match status" value="1"/>
</dbReference>
<dbReference type="PROSITE" id="PS00542">
    <property type="entry name" value="COMPLEX1_30K"/>
    <property type="match status" value="1"/>
</dbReference>
<protein>
    <recommendedName>
        <fullName evidence="1">NADH-quinone oxidoreductase subunit C</fullName>
        <ecNumber evidence="1">7.1.1.-</ecNumber>
    </recommendedName>
    <alternativeName>
        <fullName evidence="1">NADH dehydrogenase I subunit C</fullName>
    </alternativeName>
    <alternativeName>
        <fullName evidence="1">NDH-1 subunit C</fullName>
    </alternativeName>
</protein>
<name>NUOC_XANE5</name>
<gene>
    <name evidence="1" type="primary">nuoC</name>
    <name type="ordered locus">XCV2851</name>
</gene>
<evidence type="ECO:0000255" key="1">
    <source>
        <dbReference type="HAMAP-Rule" id="MF_01357"/>
    </source>
</evidence>
<sequence>MAEQASSFTDRLAARFAGAQIAVALPRGEVTLEVAAADWHATCLALRDELGFEQLSDLCGVDYLGYGSDEWDTADVSSQGFSRGVEGKAVGRFAWGEFPSQESSAGAQPQQLPKQRFAVVAQLISYQHNQRLRVRCYAPDEQVPVVASLTDIWPGVNWFEREAFDLFGIVFDGHPDLRRILTDYGFVGHPFRKDFPLIGNVEVRYDEERKRVVYEPVTSVEPRVGVPRVIRDDARYETAAGEVGKSETAK</sequence>
<comment type="function">
    <text evidence="1">NDH-1 shuttles electrons from NADH, via FMN and iron-sulfur (Fe-S) centers, to quinones in the respiratory chain. The immediate electron acceptor for the enzyme in this species is believed to be ubiquinone. Couples the redox reaction to proton translocation (for every two electrons transferred, four hydrogen ions are translocated across the cytoplasmic membrane), and thus conserves the redox energy in a proton gradient.</text>
</comment>
<comment type="catalytic activity">
    <reaction evidence="1">
        <text>a quinone + NADH + 5 H(+)(in) = a quinol + NAD(+) + 4 H(+)(out)</text>
        <dbReference type="Rhea" id="RHEA:57888"/>
        <dbReference type="ChEBI" id="CHEBI:15378"/>
        <dbReference type="ChEBI" id="CHEBI:24646"/>
        <dbReference type="ChEBI" id="CHEBI:57540"/>
        <dbReference type="ChEBI" id="CHEBI:57945"/>
        <dbReference type="ChEBI" id="CHEBI:132124"/>
    </reaction>
</comment>
<comment type="subunit">
    <text evidence="1">NDH-1 is composed of 14 different subunits. Subunits NuoB, C, D, E, F, and G constitute the peripheral sector of the complex.</text>
</comment>
<comment type="subcellular location">
    <subcellularLocation>
        <location evidence="1">Cell inner membrane</location>
        <topology evidence="1">Peripheral membrane protein</topology>
        <orientation evidence="1">Cytoplasmic side</orientation>
    </subcellularLocation>
</comment>
<comment type="similarity">
    <text evidence="1">Belongs to the complex I 30 kDa subunit family.</text>
</comment>
<accession>Q3BRN1</accession>
<feature type="chain" id="PRO_0000358227" description="NADH-quinone oxidoreductase subunit C">
    <location>
        <begin position="1"/>
        <end position="250"/>
    </location>
</feature>
<keyword id="KW-0997">Cell inner membrane</keyword>
<keyword id="KW-1003">Cell membrane</keyword>
<keyword id="KW-0472">Membrane</keyword>
<keyword id="KW-0520">NAD</keyword>
<keyword id="KW-0874">Quinone</keyword>
<keyword id="KW-1278">Translocase</keyword>
<keyword id="KW-0813">Transport</keyword>
<keyword id="KW-0830">Ubiquinone</keyword>
<organism>
    <name type="scientific">Xanthomonas euvesicatoria pv. vesicatoria (strain 85-10)</name>
    <name type="common">Xanthomonas campestris pv. vesicatoria</name>
    <dbReference type="NCBI Taxonomy" id="316273"/>
    <lineage>
        <taxon>Bacteria</taxon>
        <taxon>Pseudomonadati</taxon>
        <taxon>Pseudomonadota</taxon>
        <taxon>Gammaproteobacteria</taxon>
        <taxon>Lysobacterales</taxon>
        <taxon>Lysobacteraceae</taxon>
        <taxon>Xanthomonas</taxon>
    </lineage>
</organism>
<proteinExistence type="inferred from homology"/>